<comment type="function">
    <text evidence="1">Acts as a processive, ATP-dependent zinc metallopeptidase for both cytoplasmic and membrane proteins. Plays a role in the quality control of integral membrane proteins.</text>
</comment>
<comment type="cofactor">
    <cofactor evidence="1">
        <name>Zn(2+)</name>
        <dbReference type="ChEBI" id="CHEBI:29105"/>
    </cofactor>
    <text evidence="1">Binds 1 zinc ion per subunit.</text>
</comment>
<comment type="subunit">
    <text evidence="1">Homohexamer.</text>
</comment>
<comment type="subcellular location">
    <subcellularLocation>
        <location evidence="1">Cell inner membrane</location>
        <topology evidence="1">Multi-pass membrane protein</topology>
        <orientation evidence="1">Cytoplasmic side</orientation>
    </subcellularLocation>
</comment>
<comment type="similarity">
    <text evidence="1">In the central section; belongs to the AAA ATPase family.</text>
</comment>
<comment type="similarity">
    <text evidence="1">In the C-terminal section; belongs to the peptidase M41 family.</text>
</comment>
<gene>
    <name evidence="1" type="primary">ftsH</name>
    <name type="ordered locus">MXAN_4359</name>
</gene>
<protein>
    <recommendedName>
        <fullName evidence="1">ATP-dependent zinc metalloprotease FtsH</fullName>
        <ecNumber evidence="1">3.4.24.-</ecNumber>
    </recommendedName>
</protein>
<dbReference type="EC" id="3.4.24.-" evidence="1"/>
<dbReference type="EMBL" id="CP000113">
    <property type="protein sequence ID" value="ABF88684.1"/>
    <property type="molecule type" value="Genomic_DNA"/>
</dbReference>
<dbReference type="RefSeq" id="WP_011554360.1">
    <property type="nucleotide sequence ID" value="NC_008095.1"/>
</dbReference>
<dbReference type="SMR" id="Q1D491"/>
<dbReference type="STRING" id="246197.MXAN_4359"/>
<dbReference type="EnsemblBacteria" id="ABF88684">
    <property type="protein sequence ID" value="ABF88684"/>
    <property type="gene ID" value="MXAN_4359"/>
</dbReference>
<dbReference type="GeneID" id="41361671"/>
<dbReference type="KEGG" id="mxa:MXAN_4359"/>
<dbReference type="eggNOG" id="COG0465">
    <property type="taxonomic scope" value="Bacteria"/>
</dbReference>
<dbReference type="HOGENOM" id="CLU_000688_16_2_7"/>
<dbReference type="OrthoDB" id="9809379at2"/>
<dbReference type="Proteomes" id="UP000002402">
    <property type="component" value="Chromosome"/>
</dbReference>
<dbReference type="GO" id="GO:0005886">
    <property type="term" value="C:plasma membrane"/>
    <property type="evidence" value="ECO:0007669"/>
    <property type="project" value="UniProtKB-SubCell"/>
</dbReference>
<dbReference type="GO" id="GO:0005524">
    <property type="term" value="F:ATP binding"/>
    <property type="evidence" value="ECO:0007669"/>
    <property type="project" value="UniProtKB-UniRule"/>
</dbReference>
<dbReference type="GO" id="GO:0016887">
    <property type="term" value="F:ATP hydrolysis activity"/>
    <property type="evidence" value="ECO:0007669"/>
    <property type="project" value="UniProtKB-UniRule"/>
</dbReference>
<dbReference type="GO" id="GO:0004176">
    <property type="term" value="F:ATP-dependent peptidase activity"/>
    <property type="evidence" value="ECO:0007669"/>
    <property type="project" value="InterPro"/>
</dbReference>
<dbReference type="GO" id="GO:0004222">
    <property type="term" value="F:metalloendopeptidase activity"/>
    <property type="evidence" value="ECO:0007669"/>
    <property type="project" value="InterPro"/>
</dbReference>
<dbReference type="GO" id="GO:0008270">
    <property type="term" value="F:zinc ion binding"/>
    <property type="evidence" value="ECO:0007669"/>
    <property type="project" value="UniProtKB-UniRule"/>
</dbReference>
<dbReference type="GO" id="GO:0030163">
    <property type="term" value="P:protein catabolic process"/>
    <property type="evidence" value="ECO:0007669"/>
    <property type="project" value="UniProtKB-UniRule"/>
</dbReference>
<dbReference type="GO" id="GO:0006508">
    <property type="term" value="P:proteolysis"/>
    <property type="evidence" value="ECO:0007669"/>
    <property type="project" value="UniProtKB-KW"/>
</dbReference>
<dbReference type="CDD" id="cd19501">
    <property type="entry name" value="RecA-like_FtsH"/>
    <property type="match status" value="1"/>
</dbReference>
<dbReference type="FunFam" id="1.10.8.60:FF:000001">
    <property type="entry name" value="ATP-dependent zinc metalloprotease FtsH"/>
    <property type="match status" value="1"/>
</dbReference>
<dbReference type="FunFam" id="1.20.58.760:FF:000001">
    <property type="entry name" value="ATP-dependent zinc metalloprotease FtsH"/>
    <property type="match status" value="1"/>
</dbReference>
<dbReference type="FunFam" id="3.40.50.300:FF:000001">
    <property type="entry name" value="ATP-dependent zinc metalloprotease FtsH"/>
    <property type="match status" value="1"/>
</dbReference>
<dbReference type="Gene3D" id="1.10.8.60">
    <property type="match status" value="1"/>
</dbReference>
<dbReference type="Gene3D" id="3.30.720.210">
    <property type="match status" value="1"/>
</dbReference>
<dbReference type="Gene3D" id="3.40.50.300">
    <property type="entry name" value="P-loop containing nucleotide triphosphate hydrolases"/>
    <property type="match status" value="1"/>
</dbReference>
<dbReference type="Gene3D" id="1.20.58.760">
    <property type="entry name" value="Peptidase M41"/>
    <property type="match status" value="1"/>
</dbReference>
<dbReference type="HAMAP" id="MF_01458">
    <property type="entry name" value="FtsH"/>
    <property type="match status" value="1"/>
</dbReference>
<dbReference type="InterPro" id="IPR003593">
    <property type="entry name" value="AAA+_ATPase"/>
</dbReference>
<dbReference type="InterPro" id="IPR041569">
    <property type="entry name" value="AAA_lid_3"/>
</dbReference>
<dbReference type="InterPro" id="IPR003959">
    <property type="entry name" value="ATPase_AAA_core"/>
</dbReference>
<dbReference type="InterPro" id="IPR003960">
    <property type="entry name" value="ATPase_AAA_CS"/>
</dbReference>
<dbReference type="InterPro" id="IPR005936">
    <property type="entry name" value="FtsH"/>
</dbReference>
<dbReference type="InterPro" id="IPR027417">
    <property type="entry name" value="P-loop_NTPase"/>
</dbReference>
<dbReference type="InterPro" id="IPR011546">
    <property type="entry name" value="Pept_M41_FtsH_extracell"/>
</dbReference>
<dbReference type="InterPro" id="IPR000642">
    <property type="entry name" value="Peptidase_M41"/>
</dbReference>
<dbReference type="InterPro" id="IPR037219">
    <property type="entry name" value="Peptidase_M41-like"/>
</dbReference>
<dbReference type="NCBIfam" id="TIGR01241">
    <property type="entry name" value="FtsH_fam"/>
    <property type="match status" value="1"/>
</dbReference>
<dbReference type="PANTHER" id="PTHR23076:SF97">
    <property type="entry name" value="ATP-DEPENDENT ZINC METALLOPROTEASE YME1L1"/>
    <property type="match status" value="1"/>
</dbReference>
<dbReference type="PANTHER" id="PTHR23076">
    <property type="entry name" value="METALLOPROTEASE M41 FTSH"/>
    <property type="match status" value="1"/>
</dbReference>
<dbReference type="Pfam" id="PF00004">
    <property type="entry name" value="AAA"/>
    <property type="match status" value="1"/>
</dbReference>
<dbReference type="Pfam" id="PF17862">
    <property type="entry name" value="AAA_lid_3"/>
    <property type="match status" value="1"/>
</dbReference>
<dbReference type="Pfam" id="PF06480">
    <property type="entry name" value="FtsH_ext"/>
    <property type="match status" value="1"/>
</dbReference>
<dbReference type="Pfam" id="PF01434">
    <property type="entry name" value="Peptidase_M41"/>
    <property type="match status" value="1"/>
</dbReference>
<dbReference type="SMART" id="SM00382">
    <property type="entry name" value="AAA"/>
    <property type="match status" value="1"/>
</dbReference>
<dbReference type="SUPFAM" id="SSF140990">
    <property type="entry name" value="FtsH protease domain-like"/>
    <property type="match status" value="1"/>
</dbReference>
<dbReference type="SUPFAM" id="SSF52540">
    <property type="entry name" value="P-loop containing nucleoside triphosphate hydrolases"/>
    <property type="match status" value="1"/>
</dbReference>
<dbReference type="PROSITE" id="PS00674">
    <property type="entry name" value="AAA"/>
    <property type="match status" value="1"/>
</dbReference>
<accession>Q1D491</accession>
<feature type="chain" id="PRO_0000400363" description="ATP-dependent zinc metalloprotease FtsH">
    <location>
        <begin position="1"/>
        <end position="638"/>
    </location>
</feature>
<feature type="topological domain" description="Cytoplasmic" evidence="1">
    <location>
        <begin position="1"/>
        <end position="7"/>
    </location>
</feature>
<feature type="transmembrane region" description="Helical" evidence="1">
    <location>
        <begin position="8"/>
        <end position="28"/>
    </location>
</feature>
<feature type="topological domain" description="Periplasmic" evidence="1">
    <location>
        <begin position="29"/>
        <end position="102"/>
    </location>
</feature>
<feature type="transmembrane region" description="Helical" evidence="1">
    <location>
        <begin position="103"/>
        <end position="123"/>
    </location>
</feature>
<feature type="topological domain" description="Cytoplasmic" evidence="1">
    <location>
        <begin position="124"/>
        <end position="638"/>
    </location>
</feature>
<feature type="region of interest" description="Disordered" evidence="2">
    <location>
        <begin position="596"/>
        <end position="638"/>
    </location>
</feature>
<feature type="compositionally biased region" description="Basic and acidic residues" evidence="2">
    <location>
        <begin position="614"/>
        <end position="625"/>
    </location>
</feature>
<feature type="active site" evidence="1">
    <location>
        <position position="418"/>
    </location>
</feature>
<feature type="binding site" evidence="1">
    <location>
        <begin position="195"/>
        <end position="202"/>
    </location>
    <ligand>
        <name>ATP</name>
        <dbReference type="ChEBI" id="CHEBI:30616"/>
    </ligand>
</feature>
<feature type="binding site" evidence="1">
    <location>
        <position position="417"/>
    </location>
    <ligand>
        <name>Zn(2+)</name>
        <dbReference type="ChEBI" id="CHEBI:29105"/>
        <note>catalytic</note>
    </ligand>
</feature>
<feature type="binding site" evidence="1">
    <location>
        <position position="421"/>
    </location>
    <ligand>
        <name>Zn(2+)</name>
        <dbReference type="ChEBI" id="CHEBI:29105"/>
        <note>catalytic</note>
    </ligand>
</feature>
<feature type="binding site" evidence="1">
    <location>
        <position position="493"/>
    </location>
    <ligand>
        <name>Zn(2+)</name>
        <dbReference type="ChEBI" id="CHEBI:29105"/>
        <note>catalytic</note>
    </ligand>
</feature>
<organism>
    <name type="scientific">Myxococcus xanthus (strain DK1622)</name>
    <dbReference type="NCBI Taxonomy" id="246197"/>
    <lineage>
        <taxon>Bacteria</taxon>
        <taxon>Pseudomonadati</taxon>
        <taxon>Myxococcota</taxon>
        <taxon>Myxococcia</taxon>
        <taxon>Myxococcales</taxon>
        <taxon>Cystobacterineae</taxon>
        <taxon>Myxococcaceae</taxon>
        <taxon>Myxococcus</taxon>
    </lineage>
</organism>
<keyword id="KW-0067">ATP-binding</keyword>
<keyword id="KW-0997">Cell inner membrane</keyword>
<keyword id="KW-1003">Cell membrane</keyword>
<keyword id="KW-0378">Hydrolase</keyword>
<keyword id="KW-0472">Membrane</keyword>
<keyword id="KW-0479">Metal-binding</keyword>
<keyword id="KW-0482">Metalloprotease</keyword>
<keyword id="KW-0547">Nucleotide-binding</keyword>
<keyword id="KW-0645">Protease</keyword>
<keyword id="KW-1185">Reference proteome</keyword>
<keyword id="KW-0812">Transmembrane</keyword>
<keyword id="KW-1133">Transmembrane helix</keyword>
<keyword id="KW-0862">Zinc</keyword>
<name>FTSH_MYXXD</name>
<sequence>MRSTYKTIGLWVILIVLFVAFYNFFSQGNDQVQEPSFTQLLTKVEEKKVQEVAVKGNTYSGKFTDTSEKFRTTGPAPDAAMLNQLRSNGVDVKYEREEQNSLWLTILGQWMPVVFLFLFFIFFMRQLQGGSGKAMTFGKSKAKLLSESHNKVTFADVAGADECKEELEEIVAFLKDPKKFTKLGGRIPKGVLMMGSPGTGKTLLARAVAGEAGVPFFSISGSDFVEMFVGVGASRVRDLFEQGKKNAPCIIFIDEIDAVGRHRGAGLGGGHDEREQTLNQLLVEMDGFESNDGVILIAATNRPDVLDPALQRPGRFDRRIVVPRPDVKGRLGVLKVHTRRVPLAPEVDLEVIARGTPGMTGADLENLVNESALMAARQNKERVDLSDFEAAKDKVFMGPERRSMIMTEKEKKNTAVHEAGHALLAKLLPGCDPLHKVTIIPRGQALGVTWSLPTEDKVNGYKKQMLDQISMAMGGRIAEELMFNEMSSGAANDIERATETARAMVCRWGMSEKMGPLAFGKSDGEVFLGRDFNSSKDYSEDTARQIDAEVRNIVVGCYERGKNLLTENIEALRRVSDALVEYETLDAEDVNILLQGGQLTRERPPPRVNAPPKATEKKDKRKILDALEGLPAMEPKKA</sequence>
<reference key="1">
    <citation type="journal article" date="2006" name="Proc. Natl. Acad. Sci. U.S.A.">
        <title>Evolution of sensory complexity recorded in a myxobacterial genome.</title>
        <authorList>
            <person name="Goldman B.S."/>
            <person name="Nierman W.C."/>
            <person name="Kaiser D."/>
            <person name="Slater S.C."/>
            <person name="Durkin A.S."/>
            <person name="Eisen J.A."/>
            <person name="Ronning C.M."/>
            <person name="Barbazuk W.B."/>
            <person name="Blanchard M."/>
            <person name="Field C."/>
            <person name="Halling C."/>
            <person name="Hinkle G."/>
            <person name="Iartchuk O."/>
            <person name="Kim H.S."/>
            <person name="Mackenzie C."/>
            <person name="Madupu R."/>
            <person name="Miller N."/>
            <person name="Shvartsbeyn A."/>
            <person name="Sullivan S.A."/>
            <person name="Vaudin M."/>
            <person name="Wiegand R."/>
            <person name="Kaplan H.B."/>
        </authorList>
    </citation>
    <scope>NUCLEOTIDE SEQUENCE [LARGE SCALE GENOMIC DNA]</scope>
    <source>
        <strain>DK1622</strain>
    </source>
</reference>
<proteinExistence type="inferred from homology"/>
<evidence type="ECO:0000255" key="1">
    <source>
        <dbReference type="HAMAP-Rule" id="MF_01458"/>
    </source>
</evidence>
<evidence type="ECO:0000256" key="2">
    <source>
        <dbReference type="SAM" id="MobiDB-lite"/>
    </source>
</evidence>